<gene>
    <name type="primary">COL15A1</name>
</gene>
<name>COFA1_HUMAN</name>
<dbReference type="EMBL" id="L25286">
    <property type="protein sequence ID" value="AAA58429.1"/>
    <property type="molecule type" value="mRNA"/>
</dbReference>
<dbReference type="EMBL" id="L25280">
    <property type="protein sequence ID" value="AAC78500.1"/>
    <property type="molecule type" value="Genomic_DNA"/>
</dbReference>
<dbReference type="EMBL" id="L25281">
    <property type="protein sequence ID" value="AAC78500.1"/>
    <property type="status" value="JOINED"/>
    <property type="molecule type" value="Genomic_DNA"/>
</dbReference>
<dbReference type="EMBL" id="L25282">
    <property type="protein sequence ID" value="AAC78500.1"/>
    <property type="status" value="JOINED"/>
    <property type="molecule type" value="Genomic_DNA"/>
</dbReference>
<dbReference type="EMBL" id="L25283">
    <property type="protein sequence ID" value="AAC78500.1"/>
    <property type="status" value="JOINED"/>
    <property type="molecule type" value="Genomic_DNA"/>
</dbReference>
<dbReference type="EMBL" id="L25284">
    <property type="protein sequence ID" value="AAC78500.1"/>
    <property type="status" value="JOINED"/>
    <property type="molecule type" value="Genomic_DNA"/>
</dbReference>
<dbReference type="EMBL" id="L25285">
    <property type="protein sequence ID" value="AAC78500.1"/>
    <property type="status" value="JOINED"/>
    <property type="molecule type" value="Genomic_DNA"/>
</dbReference>
<dbReference type="EMBL" id="AF052956">
    <property type="protein sequence ID" value="AAC78500.1"/>
    <property type="status" value="JOINED"/>
    <property type="molecule type" value="Genomic_DNA"/>
</dbReference>
<dbReference type="EMBL" id="AF052957">
    <property type="protein sequence ID" value="AAC78500.1"/>
    <property type="status" value="JOINED"/>
    <property type="molecule type" value="Genomic_DNA"/>
</dbReference>
<dbReference type="EMBL" id="AF052958">
    <property type="protein sequence ID" value="AAC78500.1"/>
    <property type="status" value="JOINED"/>
    <property type="molecule type" value="Genomic_DNA"/>
</dbReference>
<dbReference type="EMBL" id="AF052959">
    <property type="protein sequence ID" value="AAC78500.1"/>
    <property type="status" value="JOINED"/>
    <property type="molecule type" value="Genomic_DNA"/>
</dbReference>
<dbReference type="EMBL" id="AF052960">
    <property type="protein sequence ID" value="AAC78500.1"/>
    <property type="status" value="JOINED"/>
    <property type="molecule type" value="Genomic_DNA"/>
</dbReference>
<dbReference type="EMBL" id="AF052961">
    <property type="protein sequence ID" value="AAC78500.1"/>
    <property type="status" value="JOINED"/>
    <property type="molecule type" value="Genomic_DNA"/>
</dbReference>
<dbReference type="EMBL" id="AF052962">
    <property type="protein sequence ID" value="AAC78500.1"/>
    <property type="status" value="JOINED"/>
    <property type="molecule type" value="Genomic_DNA"/>
</dbReference>
<dbReference type="EMBL" id="AF052963">
    <property type="protein sequence ID" value="AAC78500.1"/>
    <property type="status" value="JOINED"/>
    <property type="molecule type" value="Genomic_DNA"/>
</dbReference>
<dbReference type="EMBL" id="AF052964">
    <property type="protein sequence ID" value="AAC78500.1"/>
    <property type="status" value="JOINED"/>
    <property type="molecule type" value="Genomic_DNA"/>
</dbReference>
<dbReference type="EMBL" id="AF052965">
    <property type="protein sequence ID" value="AAC78500.1"/>
    <property type="status" value="JOINED"/>
    <property type="molecule type" value="Genomic_DNA"/>
</dbReference>
<dbReference type="EMBL" id="AF052966">
    <property type="protein sequence ID" value="AAC78500.1"/>
    <property type="status" value="JOINED"/>
    <property type="molecule type" value="Genomic_DNA"/>
</dbReference>
<dbReference type="EMBL" id="AF052967">
    <property type="protein sequence ID" value="AAC78500.1"/>
    <property type="status" value="JOINED"/>
    <property type="molecule type" value="Genomic_DNA"/>
</dbReference>
<dbReference type="EMBL" id="AF052968">
    <property type="protein sequence ID" value="AAC78500.1"/>
    <property type="status" value="JOINED"/>
    <property type="molecule type" value="Genomic_DNA"/>
</dbReference>
<dbReference type="EMBL" id="AF052969">
    <property type="protein sequence ID" value="AAC78500.1"/>
    <property type="status" value="JOINED"/>
    <property type="molecule type" value="Genomic_DNA"/>
</dbReference>
<dbReference type="EMBL" id="AF052970">
    <property type="protein sequence ID" value="AAC78500.1"/>
    <property type="status" value="JOINED"/>
    <property type="molecule type" value="Genomic_DNA"/>
</dbReference>
<dbReference type="EMBL" id="AF052971">
    <property type="protein sequence ID" value="AAC78500.1"/>
    <property type="status" value="JOINED"/>
    <property type="molecule type" value="Genomic_DNA"/>
</dbReference>
<dbReference type="EMBL" id="AF052972">
    <property type="protein sequence ID" value="AAC78500.1"/>
    <property type="status" value="JOINED"/>
    <property type="molecule type" value="Genomic_DNA"/>
</dbReference>
<dbReference type="EMBL" id="AF052973">
    <property type="protein sequence ID" value="AAC78500.1"/>
    <property type="status" value="JOINED"/>
    <property type="molecule type" value="Genomic_DNA"/>
</dbReference>
<dbReference type="EMBL" id="AF052974">
    <property type="protein sequence ID" value="AAC78500.1"/>
    <property type="status" value="JOINED"/>
    <property type="molecule type" value="Genomic_DNA"/>
</dbReference>
<dbReference type="EMBL" id="AF052975">
    <property type="protein sequence ID" value="AAC78500.1"/>
    <property type="status" value="JOINED"/>
    <property type="molecule type" value="Genomic_DNA"/>
</dbReference>
<dbReference type="EMBL" id="AL136084">
    <property type="status" value="NOT_ANNOTATED_CDS"/>
    <property type="molecule type" value="Genomic_DNA"/>
</dbReference>
<dbReference type="EMBL" id="AL354923">
    <property type="status" value="NOT_ANNOTATED_CDS"/>
    <property type="molecule type" value="Genomic_DNA"/>
</dbReference>
<dbReference type="EMBL" id="D21230">
    <property type="protein sequence ID" value="BAA04762.1"/>
    <property type="molecule type" value="mRNA"/>
</dbReference>
<dbReference type="EMBL" id="L01697">
    <property type="status" value="NOT_ANNOTATED_CDS"/>
    <property type="molecule type" value="mRNA"/>
</dbReference>
<dbReference type="CCDS" id="CCDS35081.1"/>
<dbReference type="PIR" id="A53317">
    <property type="entry name" value="A53317"/>
</dbReference>
<dbReference type="RefSeq" id="NP_001846.3">
    <property type="nucleotide sequence ID" value="NM_001855.4"/>
</dbReference>
<dbReference type="RefSeq" id="XP_011516516.1">
    <property type="nucleotide sequence ID" value="XM_011518214.2"/>
</dbReference>
<dbReference type="PDB" id="3N3F">
    <property type="method" value="X-ray"/>
    <property type="resolution" value="2.00 A"/>
    <property type="chains" value="A/B=1133-1186"/>
</dbReference>
<dbReference type="PDBsum" id="3N3F"/>
<dbReference type="SMR" id="P39059"/>
<dbReference type="BioGRID" id="107702">
    <property type="interactions" value="6"/>
</dbReference>
<dbReference type="ComplexPortal" id="CPX-1756">
    <property type="entry name" value="Collagen type XV trimer"/>
</dbReference>
<dbReference type="FunCoup" id="P39059">
    <property type="interactions" value="235"/>
</dbReference>
<dbReference type="IntAct" id="P39059">
    <property type="interactions" value="5"/>
</dbReference>
<dbReference type="STRING" id="9606.ENSP00000364140"/>
<dbReference type="ChEMBL" id="CHEMBL2364188"/>
<dbReference type="GlyConnect" id="727">
    <property type="glycosylation" value="1 O-Linked glycan (1 site)"/>
</dbReference>
<dbReference type="GlyCosmos" id="P39059">
    <property type="glycosylation" value="22 sites, 8 glycans"/>
</dbReference>
<dbReference type="GlyGen" id="P39059">
    <property type="glycosylation" value="28 sites, 9 O-linked glycans (17 sites)"/>
</dbReference>
<dbReference type="iPTMnet" id="P39059"/>
<dbReference type="PhosphoSitePlus" id="P39059"/>
<dbReference type="BioMuta" id="COL15A1"/>
<dbReference type="DMDM" id="68839886"/>
<dbReference type="jPOST" id="P39059"/>
<dbReference type="MassIVE" id="P39059"/>
<dbReference type="PaxDb" id="9606-ENSP00000364140"/>
<dbReference type="PeptideAtlas" id="P39059"/>
<dbReference type="ProteomicsDB" id="55310"/>
<dbReference type="Pumba" id="P39059"/>
<dbReference type="Antibodypedia" id="14522">
    <property type="antibodies" value="131 antibodies from 20 providers"/>
</dbReference>
<dbReference type="DNASU" id="1306"/>
<dbReference type="Ensembl" id="ENST00000375001.8">
    <property type="protein sequence ID" value="ENSP00000364140.3"/>
    <property type="gene ID" value="ENSG00000204291.12"/>
</dbReference>
<dbReference type="GeneID" id="1306"/>
<dbReference type="KEGG" id="hsa:1306"/>
<dbReference type="MANE-Select" id="ENST00000375001.8">
    <property type="protein sequence ID" value="ENSP00000364140.3"/>
    <property type="RefSeq nucleotide sequence ID" value="NM_001855.5"/>
    <property type="RefSeq protein sequence ID" value="NP_001846.3"/>
</dbReference>
<dbReference type="UCSC" id="uc004azb.3">
    <property type="organism name" value="human"/>
</dbReference>
<dbReference type="AGR" id="HGNC:2192"/>
<dbReference type="CTD" id="1306"/>
<dbReference type="DisGeNET" id="1306"/>
<dbReference type="GeneCards" id="COL15A1"/>
<dbReference type="HGNC" id="HGNC:2192">
    <property type="gene designation" value="COL15A1"/>
</dbReference>
<dbReference type="HPA" id="ENSG00000204291">
    <property type="expression patterns" value="Tissue enhanced (placenta)"/>
</dbReference>
<dbReference type="MIM" id="120325">
    <property type="type" value="gene"/>
</dbReference>
<dbReference type="neXtProt" id="NX_P39059"/>
<dbReference type="OpenTargets" id="ENSG00000204291"/>
<dbReference type="PharmGKB" id="PA26708"/>
<dbReference type="VEuPathDB" id="HostDB:ENSG00000204291"/>
<dbReference type="eggNOG" id="KOG3546">
    <property type="taxonomic scope" value="Eukaryota"/>
</dbReference>
<dbReference type="GeneTree" id="ENSGT00940000158302"/>
<dbReference type="HOGENOM" id="CLU_004003_0_0_1"/>
<dbReference type="InParanoid" id="P39059"/>
<dbReference type="OMA" id="RATEDQC"/>
<dbReference type="OrthoDB" id="10060752at2759"/>
<dbReference type="PAN-GO" id="P39059">
    <property type="GO annotations" value="6 GO annotations based on evolutionary models"/>
</dbReference>
<dbReference type="PhylomeDB" id="P39059"/>
<dbReference type="TreeFam" id="TF315821"/>
<dbReference type="PathwayCommons" id="P39059"/>
<dbReference type="Reactome" id="R-HSA-1442490">
    <property type="pathway name" value="Collagen degradation"/>
</dbReference>
<dbReference type="Reactome" id="R-HSA-1650814">
    <property type="pathway name" value="Collagen biosynthesis and modifying enzymes"/>
</dbReference>
<dbReference type="Reactome" id="R-HSA-2022090">
    <property type="pathway name" value="Assembly of collagen fibrils and other multimeric structures"/>
</dbReference>
<dbReference type="Reactome" id="R-HSA-8948216">
    <property type="pathway name" value="Collagen chain trimerization"/>
</dbReference>
<dbReference type="SignaLink" id="P39059"/>
<dbReference type="SIGNOR" id="P39059"/>
<dbReference type="BioGRID-ORCS" id="1306">
    <property type="hits" value="11 hits in 1160 CRISPR screens"/>
</dbReference>
<dbReference type="ChiTaRS" id="COL15A1">
    <property type="organism name" value="human"/>
</dbReference>
<dbReference type="EvolutionaryTrace" id="P39059"/>
<dbReference type="GeneWiki" id="Collagen,_type_XV,_alpha_1"/>
<dbReference type="GenomeRNAi" id="1306"/>
<dbReference type="Pharos" id="P39059">
    <property type="development level" value="Tbio"/>
</dbReference>
<dbReference type="PRO" id="PR:P39059"/>
<dbReference type="Proteomes" id="UP000005640">
    <property type="component" value="Chromosome 9"/>
</dbReference>
<dbReference type="RNAct" id="P39059">
    <property type="molecule type" value="protein"/>
</dbReference>
<dbReference type="Bgee" id="ENSG00000204291">
    <property type="expression patterns" value="Expressed in skin of hip and 184 other cell types or tissues"/>
</dbReference>
<dbReference type="ExpressionAtlas" id="P39059">
    <property type="expression patterns" value="baseline and differential"/>
</dbReference>
<dbReference type="GO" id="GO:0005604">
    <property type="term" value="C:basement membrane"/>
    <property type="evidence" value="ECO:0000318"/>
    <property type="project" value="GO_Central"/>
</dbReference>
<dbReference type="GO" id="GO:0005582">
    <property type="term" value="C:collagen type XV trimer"/>
    <property type="evidence" value="ECO:0000304"/>
    <property type="project" value="UniProtKB"/>
</dbReference>
<dbReference type="GO" id="GO:0062023">
    <property type="term" value="C:collagen-containing extracellular matrix"/>
    <property type="evidence" value="ECO:0007005"/>
    <property type="project" value="BHF-UCL"/>
</dbReference>
<dbReference type="GO" id="GO:0005783">
    <property type="term" value="C:endoplasmic reticulum"/>
    <property type="evidence" value="ECO:0000314"/>
    <property type="project" value="HPA"/>
</dbReference>
<dbReference type="GO" id="GO:0005788">
    <property type="term" value="C:endoplasmic reticulum lumen"/>
    <property type="evidence" value="ECO:0000304"/>
    <property type="project" value="Reactome"/>
</dbReference>
<dbReference type="GO" id="GO:0070062">
    <property type="term" value="C:extracellular exosome"/>
    <property type="evidence" value="ECO:0007005"/>
    <property type="project" value="UniProtKB"/>
</dbReference>
<dbReference type="GO" id="GO:0005576">
    <property type="term" value="C:extracellular region"/>
    <property type="evidence" value="ECO:0000304"/>
    <property type="project" value="Reactome"/>
</dbReference>
<dbReference type="GO" id="GO:0005615">
    <property type="term" value="C:extracellular space"/>
    <property type="evidence" value="ECO:0007005"/>
    <property type="project" value="BHF-UCL"/>
</dbReference>
<dbReference type="GO" id="GO:0016020">
    <property type="term" value="C:membrane"/>
    <property type="evidence" value="ECO:0000303"/>
    <property type="project" value="UniProtKB"/>
</dbReference>
<dbReference type="GO" id="GO:0030020">
    <property type="term" value="F:extracellular matrix structural constituent conferring tensile strength"/>
    <property type="evidence" value="ECO:0000250"/>
    <property type="project" value="BHF-UCL"/>
</dbReference>
<dbReference type="GO" id="GO:0001525">
    <property type="term" value="P:angiogenesis"/>
    <property type="evidence" value="ECO:0007669"/>
    <property type="project" value="UniProtKB-KW"/>
</dbReference>
<dbReference type="GO" id="GO:0007155">
    <property type="term" value="P:cell adhesion"/>
    <property type="evidence" value="ECO:0007669"/>
    <property type="project" value="UniProtKB-KW"/>
</dbReference>
<dbReference type="GO" id="GO:0030154">
    <property type="term" value="P:cell differentiation"/>
    <property type="evidence" value="ECO:0007669"/>
    <property type="project" value="UniProtKB-KW"/>
</dbReference>
<dbReference type="GO" id="GO:0007165">
    <property type="term" value="P:signal transduction"/>
    <property type="evidence" value="ECO:0000303"/>
    <property type="project" value="UniProtKB"/>
</dbReference>
<dbReference type="CDD" id="cd00247">
    <property type="entry name" value="Endostatin-like"/>
    <property type="match status" value="1"/>
</dbReference>
<dbReference type="FunFam" id="3.40.1620.70:FF:000002">
    <property type="entry name" value="Collagen alpha 1 (XV) chain"/>
    <property type="match status" value="1"/>
</dbReference>
<dbReference type="FunFam" id="3.10.100.10:FF:000008">
    <property type="entry name" value="collagen alpha-1(XVIII) chain isoform X1"/>
    <property type="match status" value="1"/>
</dbReference>
<dbReference type="FunFam" id="2.60.120.200:FF:000039">
    <property type="entry name" value="Collagen XV alpha 1 chain"/>
    <property type="match status" value="1"/>
</dbReference>
<dbReference type="Gene3D" id="2.60.120.200">
    <property type="match status" value="1"/>
</dbReference>
<dbReference type="Gene3D" id="3.40.1620.70">
    <property type="match status" value="1"/>
</dbReference>
<dbReference type="Gene3D" id="3.10.100.10">
    <property type="entry name" value="Mannose-Binding Protein A, subunit A"/>
    <property type="match status" value="1"/>
</dbReference>
<dbReference type="InterPro" id="IPR016186">
    <property type="entry name" value="C-type_lectin-like/link_sf"/>
</dbReference>
<dbReference type="InterPro" id="IPR008160">
    <property type="entry name" value="Collagen"/>
</dbReference>
<dbReference type="InterPro" id="IPR050149">
    <property type="entry name" value="Collagen_superfamily"/>
</dbReference>
<dbReference type="InterPro" id="IPR010515">
    <property type="entry name" value="Collagenase_NC10/endostatin"/>
</dbReference>
<dbReference type="InterPro" id="IPR013320">
    <property type="entry name" value="ConA-like_dom_sf"/>
</dbReference>
<dbReference type="InterPro" id="IPR016187">
    <property type="entry name" value="CTDL_fold"/>
</dbReference>
<dbReference type="InterPro" id="IPR048287">
    <property type="entry name" value="TSPN-like_N"/>
</dbReference>
<dbReference type="InterPro" id="IPR045463">
    <property type="entry name" value="XV/XVIII_trimerization_dom"/>
</dbReference>
<dbReference type="PANTHER" id="PTHR24023:SF1112">
    <property type="entry name" value="COL_CUTICLE_N DOMAIN-CONTAINING PROTEIN-RELATED"/>
    <property type="match status" value="1"/>
</dbReference>
<dbReference type="PANTHER" id="PTHR24023">
    <property type="entry name" value="COLLAGEN ALPHA"/>
    <property type="match status" value="1"/>
</dbReference>
<dbReference type="Pfam" id="PF01391">
    <property type="entry name" value="Collagen"/>
    <property type="match status" value="4"/>
</dbReference>
<dbReference type="Pfam" id="PF20010">
    <property type="entry name" value="Collagen_trimer"/>
    <property type="match status" value="1"/>
</dbReference>
<dbReference type="Pfam" id="PF06482">
    <property type="entry name" value="Endostatin"/>
    <property type="match status" value="1"/>
</dbReference>
<dbReference type="Pfam" id="PF13385">
    <property type="entry name" value="Laminin_G_3"/>
    <property type="match status" value="1"/>
</dbReference>
<dbReference type="SMART" id="SM00210">
    <property type="entry name" value="TSPN"/>
    <property type="match status" value="1"/>
</dbReference>
<dbReference type="SUPFAM" id="SSF56436">
    <property type="entry name" value="C-type lectin-like"/>
    <property type="match status" value="2"/>
</dbReference>
<dbReference type="SUPFAM" id="SSF49899">
    <property type="entry name" value="Concanavalin A-like lectins/glucanases"/>
    <property type="match status" value="1"/>
</dbReference>
<sequence>MAPRRNNGQCWCLLMLLSVSTPLPAVTQTRGATETASQGHLDLTQLIGVPLPSSVSFVTGYGGFPAYSFGPGANVGRPARTLIPSTFFRDFAISVVVKPSSTRGGVLFAITDAFQKVIYLGLRLSGVEDGHQRIILYYTEPGSHVSQEAAAFSVPVMTHRWNRFAMIVQGEEVTLLVNCEEHSRIPFQRSSQALAFESSAGIFMGNAGATGLERFTGSLQQLTVHPDPRTPEELCDPEESSASGETSGLQEADGVAEILEAVTYTQASPKEAKVEPINTPPTPSSPFEDMELSGEPVPEGTLETTNMSIIQHSSPKQGSGEILNDTLEGVHSVDGDPITDSGSGAGAFLDIAEEKNLAATAAGLAEVPISTAGEAEASSVPTGGPTLSMSTENPEEGVTPGPDNEERLAATAAGEAEALASMPGEVEASGVAPGELDLSMSAQSLGEEATVGPSSEDSLTTAAAATEVSLSTFEDEEASGVPTDGLAPLTATMAPERAVTSGPGDEEDLAAATTEEPLITAGGEESGSPPPDGPPLPLPTVAPERWITPAQREHVGMKGQAGPKGEKGDAGEELPGPPEPSGPVGPTAGAEAEGSGLGWGSDVGSGSGDLVGSEQLLRGPPGPPGPPGLPGIPGKPGTDVFMGPPGSPGEDGPAGEPGPPGPEGQPGVDGATGLPGMKGEKGARGPNGSVGEKGDPGNRGLPGPPGKKGQAGPPGVMGPPGPPGPPGPPGPGCTMGLGFEDTEGSGSTQLLNEPKLSRPTAAIGLKGEKGDRGPKGERGMDGASIVGPPGPRGPPGHIKVLSNSLINITHGFMNFSDIPELVGPPGPDGLPGLPGFPGPRGPKGDTGLPGFPGLKGEQGEKGEPGAILTEDIPLERLMGKKGEPGMHGAPGPMGPKGPPGHKGEFGLPGRPGRPGLNGLKGTKGDPGVIMQGPPGLPGPPGPPGPPGAVINIKGAIFPIPVRPHCKMPVDTAHPGSPELITFHGVKGEKGSWGLPGSKGEKGDQGAQGPPGPPLDLAYLRHFLNNLKGENGDKGFKGEKGEKGDINGSFLMSGPPGLPGNPGPAGQKGETVVGPQGPPGAPGLPGPPGFGRPGDPGPPGPPGPPGPPAILGAAVALPGPPGPPGQPGLPGSRNLVTAFSNMDDMLQKAHLVIEGTFIYLRDSTEFFIRVRDGWKKLQLGELIPIPADSPPPPALSSNPHQLLPPPNPISSANYEKPALHLAALNMPFSGDIRADFQCFKQARAAGLLSTYRAFLSSHLQDLSTIVRKAERYSLPIVNLKGQVLFNNWDSIFSGHGGQFNMHIPIYSFDGRDIMTDPSWPQKVIWHGSSPHGVRLVDNYCEAWRTADTAVTGLASPLSTGKILDQKAYSCANRLIVLCIENSFMTDARK</sequence>
<proteinExistence type="evidence at protein level"/>
<organism>
    <name type="scientific">Homo sapiens</name>
    <name type="common">Human</name>
    <dbReference type="NCBI Taxonomy" id="9606"/>
    <lineage>
        <taxon>Eukaryota</taxon>
        <taxon>Metazoa</taxon>
        <taxon>Chordata</taxon>
        <taxon>Craniata</taxon>
        <taxon>Vertebrata</taxon>
        <taxon>Euteleostomi</taxon>
        <taxon>Mammalia</taxon>
        <taxon>Eutheria</taxon>
        <taxon>Euarchontoglires</taxon>
        <taxon>Primates</taxon>
        <taxon>Haplorrhini</taxon>
        <taxon>Catarrhini</taxon>
        <taxon>Hominidae</taxon>
        <taxon>Homo</taxon>
    </lineage>
</organism>
<comment type="function">
    <text evidence="5">Structural protein that stabilizes microvessels and muscle cells, both in heart and in skeletal muscle.</text>
</comment>
<comment type="function">
    <text evidence="1">Restin potently inhibits angiogenesis.</text>
</comment>
<comment type="subunit">
    <text evidence="7">Trimer; disulfide-linked.</text>
</comment>
<comment type="subunit">
    <molecule>Restin</molecule>
    <text evidence="2">Interacts moderately with EFEMP2.</text>
</comment>
<comment type="subcellular location">
    <subcellularLocation>
        <location evidence="1">Secreted</location>
        <location evidence="1">Extracellular space</location>
        <location evidence="1">Extracellular matrix</location>
    </subcellularLocation>
    <subcellularLocation>
        <location evidence="9 11 12">Secreted</location>
    </subcellularLocation>
</comment>
<comment type="tissue specificity">
    <text evidence="9 10 11 12">Detected in fibroblasts and urine (at protein level) (PubMed:25326458, PubMed:36213313, PubMed:37453717). Detected in placenta (at protein level) (PubMed:32337544). Expressed predominantly in internal organs such as adrenal gland, pancreas and kidney.</text>
</comment>
<comment type="PTM">
    <text>Prolines at the third position of the tripeptide repeating unit (G-X-Y) are hydroxylated in some or all of the chains.</text>
</comment>
<comment type="PTM">
    <text evidence="6 8 9 10 11">O-glycosylated; with core 1 or possibly core 8 glycans. Contains chondroitin sulfate.</text>
</comment>
<comment type="similarity">
    <text evidence="14">Belongs to the multiplexin collagen family.</text>
</comment>
<comment type="caution">
    <text evidence="14">The name restin has also been used for CAP-Gly domain-containing linker protein 1 the product of the CLIP1 gene.</text>
</comment>
<reference key="1">
    <citation type="journal article" date="1994" name="J. Biol. Chem.">
        <title>Primary structure of the alpha 1 chain of human type XV collagen and exon-intron organization in the 3' region of the corresponding gene.</title>
        <authorList>
            <person name="Kivirikko S."/>
            <person name="Heinamaki P."/>
            <person name="Rehn M.V."/>
            <person name="Honkanen N."/>
            <person name="Myers J.C."/>
            <person name="Pihlajaniemi T."/>
        </authorList>
    </citation>
    <scope>NUCLEOTIDE SEQUENCE [GENOMIC DNA / MRNA]</scope>
    <source>
        <tissue>Umbilical cord</tissue>
    </source>
</reference>
<reference key="2">
    <citation type="journal article" date="1998" name="J. Biol. Chem.">
        <title>Complete exon-intron organization of the human gene for the alpha1 chain of type XV collagen (COL15A1) and comparison with the homologous COL18A1 gene.</title>
        <authorList>
            <person name="Haegg P.M."/>
            <person name="Muona A."/>
            <person name="Lietard J."/>
            <person name="Kivirikko S."/>
            <person name="Pihlajaniemi T."/>
        </authorList>
    </citation>
    <scope>NUCLEOTIDE SEQUENCE [GENOMIC DNA]</scope>
</reference>
<reference key="3">
    <citation type="journal article" date="2004" name="Nature">
        <title>DNA sequence and analysis of human chromosome 9.</title>
        <authorList>
            <person name="Humphray S.J."/>
            <person name="Oliver K."/>
            <person name="Hunt A.R."/>
            <person name="Plumb R.W."/>
            <person name="Loveland J.E."/>
            <person name="Howe K.L."/>
            <person name="Andrews T.D."/>
            <person name="Searle S."/>
            <person name="Hunt S.E."/>
            <person name="Scott C.E."/>
            <person name="Jones M.C."/>
            <person name="Ainscough R."/>
            <person name="Almeida J.P."/>
            <person name="Ambrose K.D."/>
            <person name="Ashwell R.I.S."/>
            <person name="Babbage A.K."/>
            <person name="Babbage S."/>
            <person name="Bagguley C.L."/>
            <person name="Bailey J."/>
            <person name="Banerjee R."/>
            <person name="Barker D.J."/>
            <person name="Barlow K.F."/>
            <person name="Bates K."/>
            <person name="Beasley H."/>
            <person name="Beasley O."/>
            <person name="Bird C.P."/>
            <person name="Bray-Allen S."/>
            <person name="Brown A.J."/>
            <person name="Brown J.Y."/>
            <person name="Burford D."/>
            <person name="Burrill W."/>
            <person name="Burton J."/>
            <person name="Carder C."/>
            <person name="Carter N.P."/>
            <person name="Chapman J.C."/>
            <person name="Chen Y."/>
            <person name="Clarke G."/>
            <person name="Clark S.Y."/>
            <person name="Clee C.M."/>
            <person name="Clegg S."/>
            <person name="Collier R.E."/>
            <person name="Corby N."/>
            <person name="Crosier M."/>
            <person name="Cummings A.T."/>
            <person name="Davies J."/>
            <person name="Dhami P."/>
            <person name="Dunn M."/>
            <person name="Dutta I."/>
            <person name="Dyer L.W."/>
            <person name="Earthrowl M.E."/>
            <person name="Faulkner L."/>
            <person name="Fleming C.J."/>
            <person name="Frankish A."/>
            <person name="Frankland J.A."/>
            <person name="French L."/>
            <person name="Fricker D.G."/>
            <person name="Garner P."/>
            <person name="Garnett J."/>
            <person name="Ghori J."/>
            <person name="Gilbert J.G.R."/>
            <person name="Glison C."/>
            <person name="Grafham D.V."/>
            <person name="Gribble S."/>
            <person name="Griffiths C."/>
            <person name="Griffiths-Jones S."/>
            <person name="Grocock R."/>
            <person name="Guy J."/>
            <person name="Hall R.E."/>
            <person name="Hammond S."/>
            <person name="Harley J.L."/>
            <person name="Harrison E.S.I."/>
            <person name="Hart E.A."/>
            <person name="Heath P.D."/>
            <person name="Henderson C.D."/>
            <person name="Hopkins B.L."/>
            <person name="Howard P.J."/>
            <person name="Howden P.J."/>
            <person name="Huckle E."/>
            <person name="Johnson C."/>
            <person name="Johnson D."/>
            <person name="Joy A.A."/>
            <person name="Kay M."/>
            <person name="Keenan S."/>
            <person name="Kershaw J.K."/>
            <person name="Kimberley A.M."/>
            <person name="King A."/>
            <person name="Knights A."/>
            <person name="Laird G.K."/>
            <person name="Langford C."/>
            <person name="Lawlor S."/>
            <person name="Leongamornlert D.A."/>
            <person name="Leversha M."/>
            <person name="Lloyd C."/>
            <person name="Lloyd D.M."/>
            <person name="Lovell J."/>
            <person name="Martin S."/>
            <person name="Mashreghi-Mohammadi M."/>
            <person name="Matthews L."/>
            <person name="McLaren S."/>
            <person name="McLay K.E."/>
            <person name="McMurray A."/>
            <person name="Milne S."/>
            <person name="Nickerson T."/>
            <person name="Nisbett J."/>
            <person name="Nordsiek G."/>
            <person name="Pearce A.V."/>
            <person name="Peck A.I."/>
            <person name="Porter K.M."/>
            <person name="Pandian R."/>
            <person name="Pelan S."/>
            <person name="Phillimore B."/>
            <person name="Povey S."/>
            <person name="Ramsey Y."/>
            <person name="Rand V."/>
            <person name="Scharfe M."/>
            <person name="Sehra H.K."/>
            <person name="Shownkeen R."/>
            <person name="Sims S.K."/>
            <person name="Skuce C.D."/>
            <person name="Smith M."/>
            <person name="Steward C.A."/>
            <person name="Swarbreck D."/>
            <person name="Sycamore N."/>
            <person name="Tester J."/>
            <person name="Thorpe A."/>
            <person name="Tracey A."/>
            <person name="Tromans A."/>
            <person name="Thomas D.W."/>
            <person name="Wall M."/>
            <person name="Wallis J.M."/>
            <person name="West A.P."/>
            <person name="Whitehead S.L."/>
            <person name="Willey D.L."/>
            <person name="Williams S.A."/>
            <person name="Wilming L."/>
            <person name="Wray P.W."/>
            <person name="Young L."/>
            <person name="Ashurst J.L."/>
            <person name="Coulson A."/>
            <person name="Blocker H."/>
            <person name="Durbin R.M."/>
            <person name="Sulston J.E."/>
            <person name="Hubbard T."/>
            <person name="Jackson M.J."/>
            <person name="Bentley D.R."/>
            <person name="Beck S."/>
            <person name="Rogers J."/>
            <person name="Dunham I."/>
        </authorList>
    </citation>
    <scope>NUCLEOTIDE SEQUENCE [LARGE SCALE GENOMIC DNA]</scope>
</reference>
<reference key="4">
    <citation type="journal article" date="1994" name="J. Biol. Chem.">
        <title>The human alpha 1(XV) collagen chain contains a large amino-terminal non-triple helical domain with a tandem repeat structure and homology to alpha 1(XVIII) collagen.</title>
        <authorList>
            <person name="Muragaki Y."/>
            <person name="Abe N."/>
            <person name="Ninomiya Y."/>
            <person name="Olsen B.R."/>
            <person name="Ooshima A."/>
        </authorList>
    </citation>
    <scope>NUCLEOTIDE SEQUENCE [MRNA] OF 1-569</scope>
    <scope>VARIANT VAL-204</scope>
    <source>
        <tissue>Placenta</tissue>
    </source>
</reference>
<reference key="5">
    <citation type="journal article" date="1992" name="Proc. Natl. Acad. Sci. U.S.A.">
        <title>Identification of a previously unknown human collagen chain, alpha 1(XV), characterized by extensive interruptions in the triple-helical region.</title>
        <authorList>
            <person name="Myers J.C."/>
            <person name="Kivirikko S."/>
            <person name="Gordon M.K."/>
            <person name="Dion A.S."/>
            <person name="Pihlajaniemi T."/>
        </authorList>
    </citation>
    <scope>NUCLEOTIDE SEQUENCE [MRNA] OF 544-1252</scope>
</reference>
<reference key="6">
    <citation type="journal article" date="1992" name="Genomics">
        <title>Chromosomal assignment of a gene encoding a new collagen type (COL15A1) to 9q21 --&gt; q22.</title>
        <authorList>
            <person name="Huebner K."/>
            <person name="Cannizzaro L.A."/>
            <person name="Jabs E.W."/>
            <person name="Kivirikko S."/>
            <person name="Manzone H."/>
            <person name="Pihlajaniemi T."/>
            <person name="Myers J.C."/>
        </authorList>
    </citation>
    <scope>NUCLEOTIDE SEQUENCE [MRNA] OF 1105-1145</scope>
    <scope>CHROMOSOMAL LOCATION</scope>
    <source>
        <tissue>Placenta</tissue>
    </source>
</reference>
<reference key="7">
    <citation type="journal article" date="2005" name="Biochim. Biophys. Acta">
        <title>Identification and characterization of novel endogenous proteolytic forms of the human angiogenesis inhibitors restin and endostatin.</title>
        <authorList>
            <person name="John H."/>
            <person name="Radtke K."/>
            <person name="Staendker L."/>
            <person name="Forssmann W.G."/>
        </authorList>
    </citation>
    <scope>PROTEIN SEQUENCE OF 1198-1210; 1207-1219; 1213-1225 AND 1221-1233</scope>
    <scope>IDENTIFICATION OF RESTIN-RELATED PEPTIDES</scope>
    <scope>DISULFIDE BOND</scope>
</reference>
<reference key="8">
    <citation type="journal article" date="1999" name="Biochem. Biophys. Res. Commun.">
        <title>Antiangiogenic activity of restin, NC10 domain of human collagen XV: comparison to endostatin.</title>
        <authorList>
            <person name="Ramchandran R."/>
            <person name="Dhanabal M."/>
            <person name="Volk R."/>
            <person name="Waterman M.J.F."/>
            <person name="Segal M."/>
            <person name="Lu H."/>
            <person name="Knebelmann B."/>
            <person name="Sukhatme V.P."/>
        </authorList>
    </citation>
    <scope>FUNCTION</scope>
</reference>
<reference key="9">
    <citation type="journal article" date="2000" name="J. Biol. Chem.">
        <title>Basement membrane zone type XV collagen is a disulfide-bonded chondroitin sulfate proteoglycan in human tissues and cultured cells.</title>
        <authorList>
            <person name="Li D."/>
            <person name="Clark C.C."/>
            <person name="Myers J.C."/>
        </authorList>
    </citation>
    <scope>GLYCOSYLATION</scope>
    <scope>STRUCTURE OF CARBOHYDRATES</scope>
    <scope>INTERCHAIN DISULFIDE BONDS</scope>
</reference>
<reference key="10">
    <citation type="journal article" date="2012" name="Mol. Cell. Proteomics">
        <title>Human urinary glycoproteomics; attachment site specific analysis of N- and O-linked glycosylations by CID and ECD.</title>
        <authorList>
            <person name="Halim A."/>
            <person name="Nilsson J."/>
            <person name="Ruetschi U."/>
            <person name="Hesse C."/>
            <person name="Larson G."/>
        </authorList>
    </citation>
    <scope>GLYCOSYLATION AT THR-265</scope>
    <scope>STRUCTURE OF CARBOHYDRATES</scope>
    <scope>IDENTIFICATION BY MASS SPECTROMETRY</scope>
</reference>
<reference key="11">
    <citation type="journal article" date="2015" name="Mol. Cell. Proteomics">
        <title>Identification of chondroitin sulfate linkage region glycopeptides reveals prohormones as a novel class of proteoglycans.</title>
        <authorList>
            <person name="Noborn F."/>
            <person name="Gomez Toledo A."/>
            <person name="Sihlbom C."/>
            <person name="Lengqvist J."/>
            <person name="Fries E."/>
            <person name="Kjellen L."/>
            <person name="Nilsson J."/>
            <person name="Larson G."/>
        </authorList>
    </citation>
    <scope>SUBCELLULAR LOCATION</scope>
    <scope>TISSUE SPECIFICITY</scope>
    <scope>GLYCOSYLATION</scope>
</reference>
<reference key="12">
    <citation type="journal article" date="2020" name="Glycobiology">
        <title>An affinity chromatography and glycoproteomics workflow to profile the chondroitin sulfate proteoglycans that interact with malarial VAR2CSA in the placenta and in cancer.</title>
        <authorList>
            <person name="Toledo A.G."/>
            <person name="Pihl J."/>
            <person name="Spliid C.B."/>
            <person name="Persson A."/>
            <person name="Nilsson J."/>
            <person name="Pereira M.A."/>
            <person name="Gustavsson T."/>
            <person name="Choudhary S."/>
            <person name="Oo H.Z."/>
            <person name="Black P.C."/>
            <person name="Daugaard M."/>
            <person name="Esko J.D."/>
            <person name="Larson G."/>
            <person name="Salanti A."/>
            <person name="Clausen T.M."/>
        </authorList>
    </citation>
    <scope>TISSUE SPECIFICITY</scope>
    <scope>GLYCOSYLATION AT SER-745</scope>
</reference>
<reference key="13">
    <citation type="journal article" date="2022" name="J. Proteins Proteom.">
        <title>Mass spectrometric analysis of chondroitin sulfate-linked peptides.</title>
        <authorList>
            <person name="Ramarajan M.G."/>
            <person name="Saraswat M."/>
            <person name="Budhraja R."/>
            <person name="Garapati K."/>
            <person name="Raymond K."/>
            <person name="Pandey A."/>
        </authorList>
    </citation>
    <scope>SUBCELLULAR LOCATION</scope>
    <scope>TISSUE SPECIFICITY</scope>
    <scope>GLYCOSYLATION</scope>
</reference>
<reference key="14">
    <citation type="journal article" date="2023" name="Mol. Cell. Proteomics">
        <title>Mapping the Human Chondroitin Sulfate Glycoproteome Reveals an Unexpected Correlation Between Glycan Sulfation and Attachment Site Characteristics.</title>
        <authorList>
            <person name="Noborn F."/>
            <person name="Nilsson J."/>
            <person name="Sihlbom C."/>
            <person name="Nikpour M."/>
            <person name="Kjellen L."/>
            <person name="Larson G."/>
        </authorList>
    </citation>
    <scope>SUBCELLULAR LOCATION</scope>
    <scope>TISSUE SPECIFICITY</scope>
    <scope>GLYCOSYLATION AT SER-343</scope>
</reference>
<accession>P39059</accession>
<accession>Q5T6J4</accession>
<accession>Q9UDC5</accession>
<accession>Q9Y4W4</accession>
<evidence type="ECO:0000250" key="1"/>
<evidence type="ECO:0000250" key="2">
    <source>
        <dbReference type="UniProtKB" id="O35206"/>
    </source>
</evidence>
<evidence type="ECO:0000255" key="3"/>
<evidence type="ECO:0000256" key="4">
    <source>
        <dbReference type="SAM" id="MobiDB-lite"/>
    </source>
</evidence>
<evidence type="ECO:0000269" key="5">
    <source>
    </source>
</evidence>
<evidence type="ECO:0000269" key="6">
    <source>
    </source>
</evidence>
<evidence type="ECO:0000269" key="7">
    <source>
    </source>
</evidence>
<evidence type="ECO:0000269" key="8">
    <source>
    </source>
</evidence>
<evidence type="ECO:0000269" key="9">
    <source>
    </source>
</evidence>
<evidence type="ECO:0000269" key="10">
    <source>
    </source>
</evidence>
<evidence type="ECO:0000269" key="11">
    <source>
    </source>
</evidence>
<evidence type="ECO:0000269" key="12">
    <source>
    </source>
</evidence>
<evidence type="ECO:0000269" key="13">
    <source>
    </source>
</evidence>
<evidence type="ECO:0000305" key="14"/>
<evidence type="ECO:0007829" key="15">
    <source>
        <dbReference type="PDB" id="3N3F"/>
    </source>
</evidence>
<protein>
    <recommendedName>
        <fullName>Collagen alpha-1(XV) chain</fullName>
    </recommendedName>
    <component>
        <recommendedName>
            <fullName>Restin</fullName>
        </recommendedName>
        <alternativeName>
            <fullName>Endostatin-XV</fullName>
        </alternativeName>
        <alternativeName>
            <fullName>Related to endostatin</fullName>
        </alternativeName>
        <alternativeName>
            <fullName>Restin-I</fullName>
        </alternativeName>
    </component>
    <component>
        <recommendedName>
            <fullName>Restin-2</fullName>
        </recommendedName>
        <alternativeName>
            <fullName>Restin-II</fullName>
        </alternativeName>
    </component>
    <component>
        <recommendedName>
            <fullName>Restin-3</fullName>
        </recommendedName>
        <alternativeName>
            <fullName>Restin-III</fullName>
        </alternativeName>
    </component>
    <component>
        <recommendedName>
            <fullName>Restin-4</fullName>
        </recommendedName>
        <alternativeName>
            <fullName>Restin-IV</fullName>
        </alternativeName>
    </component>
</protein>
<keyword id="KW-0002">3D-structure</keyword>
<keyword id="KW-0037">Angiogenesis</keyword>
<keyword id="KW-0130">Cell adhesion</keyword>
<keyword id="KW-0176">Collagen</keyword>
<keyword id="KW-0217">Developmental protein</keyword>
<keyword id="KW-0221">Differentiation</keyword>
<keyword id="KW-0903">Direct protein sequencing</keyword>
<keyword id="KW-1015">Disulfide bond</keyword>
<keyword id="KW-0272">Extracellular matrix</keyword>
<keyword id="KW-0325">Glycoprotein</keyword>
<keyword id="KW-0379">Hydroxylation</keyword>
<keyword id="KW-0654">Proteoglycan</keyword>
<keyword id="KW-1267">Proteomics identification</keyword>
<keyword id="KW-1185">Reference proteome</keyword>
<keyword id="KW-0677">Repeat</keyword>
<keyword id="KW-0964">Secreted</keyword>
<keyword id="KW-0732">Signal</keyword>
<feature type="signal peptide" evidence="3">
    <location>
        <begin position="1"/>
        <end position="27"/>
    </location>
</feature>
<feature type="chain" id="PRO_0000005788" description="Collagen alpha-1(XV) chain">
    <location>
        <begin position="28"/>
        <end position="1388"/>
    </location>
</feature>
<feature type="chain" id="PRO_0000005789" description="Restin">
    <location>
        <begin position="1198"/>
        <end position="1386"/>
    </location>
</feature>
<feature type="chain" id="PRO_0000423014" description="Restin-2">
    <location>
        <begin position="1207"/>
        <end position="1386"/>
    </location>
</feature>
<feature type="chain" id="PRO_0000423015" description="Restin-3">
    <location>
        <begin position="1213"/>
        <end position="1386"/>
    </location>
</feature>
<feature type="chain" id="PRO_0000423016" description="Restin-4">
    <location>
        <begin position="1221"/>
        <end position="1386"/>
    </location>
</feature>
<feature type="domain" description="Laminin G-like">
    <location>
        <begin position="66"/>
        <end position="249"/>
    </location>
</feature>
<feature type="repeat" description="1">
    <location>
        <begin position="358"/>
        <end position="408"/>
    </location>
</feature>
<feature type="repeat" description="2">
    <location>
        <begin position="409"/>
        <end position="459"/>
    </location>
</feature>
<feature type="repeat" description="3">
    <location>
        <begin position="460"/>
        <end position="509"/>
    </location>
</feature>
<feature type="repeat" description="4">
    <location>
        <begin position="510"/>
        <end position="555"/>
    </location>
</feature>
<feature type="domain" description="Collagen-like 1">
    <location>
        <begin position="619"/>
        <end position="680"/>
    </location>
</feature>
<feature type="domain" description="Collagen-like 2">
    <location>
        <begin position="681"/>
        <end position="731"/>
    </location>
</feature>
<feature type="domain" description="Collagen-like 3">
    <location>
        <begin position="823"/>
        <end position="865"/>
    </location>
</feature>
<feature type="domain" description="Collagen-like 4">
    <location>
        <begin position="879"/>
        <end position="927"/>
    </location>
</feature>
<feature type="region of interest" description="Disordered" evidence="4">
    <location>
        <begin position="223"/>
        <end position="250"/>
    </location>
</feature>
<feature type="region of interest" description="Nonhelical region 1 (NC1)">
    <location>
        <begin position="229"/>
        <end position="555"/>
    </location>
</feature>
<feature type="region of interest" description="Disordered" evidence="4">
    <location>
        <begin position="266"/>
        <end position="301"/>
    </location>
</feature>
<feature type="region of interest" description="4 X tandem repeats">
    <location>
        <begin position="358"/>
        <end position="555"/>
    </location>
</feature>
<feature type="region of interest" description="Disordered" evidence="4">
    <location>
        <begin position="371"/>
        <end position="795"/>
    </location>
</feature>
<feature type="region of interest" description="Triple-helical region 1 (COL1)">
    <location>
        <begin position="556"/>
        <end position="573"/>
    </location>
</feature>
<feature type="region of interest" description="Nonhelical region 2 (NC2)">
    <location>
        <begin position="574"/>
        <end position="618"/>
    </location>
</feature>
<feature type="region of interest" description="Triple-helical region 2 (COL2)">
    <location>
        <begin position="619"/>
        <end position="732"/>
    </location>
</feature>
<feature type="region of interest" description="Nonhelical region 3 (NC3)">
    <location>
        <begin position="733"/>
        <end position="763"/>
    </location>
</feature>
<feature type="region of interest" description="Triple-helical region 3 (COL3)">
    <location>
        <begin position="764"/>
        <end position="798"/>
    </location>
</feature>
<feature type="region of interest" description="Nonhelical region 4 (NC4)">
    <location>
        <begin position="799"/>
        <end position="822"/>
    </location>
</feature>
<feature type="region of interest" description="Triple-helical region 4 (COL4)">
    <location>
        <begin position="823"/>
        <end position="867"/>
    </location>
</feature>
<feature type="region of interest" description="Disordered" evidence="4">
    <location>
        <begin position="827"/>
        <end position="864"/>
    </location>
</feature>
<feature type="region of interest" description="Nonhelical region 5 (NC5)">
    <location>
        <begin position="868"/>
        <end position="878"/>
    </location>
</feature>
<feature type="region of interest" description="Triple-helical region 5 (COL5)">
    <location>
        <begin position="879"/>
        <end position="949"/>
    </location>
</feature>
<feature type="region of interest" description="Nonhelical region 6 (NC6)">
    <location>
        <begin position="950"/>
        <end position="983"/>
    </location>
</feature>
<feature type="region of interest" description="Triple-helical region 6 (COL6)">
    <location>
        <begin position="984"/>
        <end position="1013"/>
    </location>
</feature>
<feature type="region of interest" description="Disordered" evidence="4">
    <location>
        <begin position="988"/>
        <end position="1016"/>
    </location>
</feature>
<feature type="region of interest" description="Nonhelical region 7 (NC7)">
    <location>
        <begin position="1014"/>
        <end position="1027"/>
    </location>
</feature>
<feature type="region of interest" description="Triple-helical region 7 (COL7)">
    <location>
        <begin position="1028"/>
        <end position="1045"/>
    </location>
</feature>
<feature type="region of interest" description="Disordered" evidence="4">
    <location>
        <begin position="1029"/>
        <end position="1133"/>
    </location>
</feature>
<feature type="region of interest" description="Nonhelical region 8 (NC8)">
    <location>
        <begin position="1046"/>
        <end position="1052"/>
    </location>
</feature>
<feature type="region of interest" description="Triple-helical region 8 (COL8)">
    <location>
        <begin position="1053"/>
        <end position="1107"/>
    </location>
</feature>
<feature type="region of interest" description="Nonhelical region 9 (NC9)">
    <location>
        <begin position="1108"/>
        <end position="1117"/>
    </location>
</feature>
<feature type="region of interest" description="Triple-helical region 9 (COL9)">
    <location>
        <begin position="1118"/>
        <end position="1132"/>
    </location>
</feature>
<feature type="region of interest" description="Nonhelical region 10 (NC10)">
    <location>
        <begin position="1133"/>
        <end position="1388"/>
    </location>
</feature>
<feature type="compositionally biased region" description="Polar residues" evidence="4">
    <location>
        <begin position="240"/>
        <end position="249"/>
    </location>
</feature>
<feature type="compositionally biased region" description="Polar residues" evidence="4">
    <location>
        <begin position="379"/>
        <end position="392"/>
    </location>
</feature>
<feature type="compositionally biased region" description="Low complexity" evidence="4">
    <location>
        <begin position="409"/>
        <end position="420"/>
    </location>
</feature>
<feature type="compositionally biased region" description="Polar residues" evidence="4">
    <location>
        <begin position="452"/>
        <end position="472"/>
    </location>
</feature>
<feature type="compositionally biased region" description="Low complexity" evidence="4">
    <location>
        <begin position="510"/>
        <end position="527"/>
    </location>
</feature>
<feature type="compositionally biased region" description="Pro residues" evidence="4">
    <location>
        <begin position="528"/>
        <end position="540"/>
    </location>
</feature>
<feature type="compositionally biased region" description="Gly residues" evidence="4">
    <location>
        <begin position="595"/>
        <end position="609"/>
    </location>
</feature>
<feature type="compositionally biased region" description="Pro residues" evidence="4">
    <location>
        <begin position="620"/>
        <end position="630"/>
    </location>
</feature>
<feature type="compositionally biased region" description="Pro residues" evidence="4">
    <location>
        <begin position="716"/>
        <end position="731"/>
    </location>
</feature>
<feature type="compositionally biased region" description="Basic and acidic residues" evidence="4">
    <location>
        <begin position="766"/>
        <end position="780"/>
    </location>
</feature>
<feature type="compositionally biased region" description="Pro residues" evidence="4">
    <location>
        <begin position="827"/>
        <end position="840"/>
    </location>
</feature>
<feature type="compositionally biased region" description="Basic and acidic residues" evidence="4">
    <location>
        <begin position="1029"/>
        <end position="1044"/>
    </location>
</feature>
<feature type="compositionally biased region" description="Pro residues" evidence="4">
    <location>
        <begin position="1075"/>
        <end position="1107"/>
    </location>
</feature>
<feature type="compositionally biased region" description="Pro residues" evidence="4">
    <location>
        <begin position="1117"/>
        <end position="1126"/>
    </location>
</feature>
<feature type="glycosylation site" description="O-linked (Xyl...) (chondroitin sulfate) serine" evidence="3">
    <location>
        <position position="243"/>
    </location>
</feature>
<feature type="glycosylation site" description="O-linked (Xyl...) (chondroitin sulfate) serine" evidence="3">
    <location>
        <position position="247"/>
    </location>
</feature>
<feature type="glycosylation site" description="O-linked (GalNAc...) threonine" evidence="8">
    <location>
        <position position="265"/>
    </location>
</feature>
<feature type="glycosylation site" description="N-linked (GlcNAc...) asparagine" evidence="3">
    <location>
        <position position="306"/>
    </location>
</feature>
<feature type="glycosylation site" description="N-linked (GlcNAc...) asparagine" evidence="3">
    <location>
        <position position="324"/>
    </location>
</feature>
<feature type="glycosylation site" description="O-linked (Xyl...) (chondroitin sulfate) serine" evidence="12">
    <location>
        <position position="343"/>
    </location>
</feature>
<feature type="glycosylation site" description="N-linked (GlcNAc...) asparagine" evidence="3">
    <location>
        <position position="687"/>
    </location>
</feature>
<feature type="glycosylation site" description="O-linked (Xyl...) (chondroitin sulfate) serine" evidence="10">
    <location>
        <position position="745"/>
    </location>
</feature>
<feature type="glycosylation site" description="N-linked (GlcNAc...) asparagine" evidence="3">
    <location>
        <position position="807"/>
    </location>
</feature>
<feature type="glycosylation site" description="N-linked (GlcNAc...) asparagine" evidence="3">
    <location>
        <position position="814"/>
    </location>
</feature>
<feature type="glycosylation site" description="N-linked (GlcNAc...) asparagine" evidence="3">
    <location>
        <position position="1046"/>
    </location>
</feature>
<feature type="disulfide bond" evidence="7">
    <location>
        <begin position="1237"/>
        <end position="1377"/>
    </location>
</feature>
<feature type="disulfide bond" evidence="7">
    <location>
        <begin position="1339"/>
        <end position="1369"/>
    </location>
</feature>
<feature type="sequence variant" id="VAR_033787" description="In dbSNP:rs2075662.">
    <original>R</original>
    <variation>H</variation>
    <location>
        <position position="163"/>
    </location>
</feature>
<feature type="sequence variant" id="VAR_033788" description="In dbSNP:rs2075663." evidence="13">
    <original>M</original>
    <variation>V</variation>
    <location>
        <position position="204"/>
    </location>
</feature>
<feature type="sequence variant" id="VAR_033789" description="In dbSNP:rs10988532.">
    <original>T</original>
    <variation>M</variation>
    <location>
        <position position="391"/>
    </location>
</feature>
<feature type="sequence variant" id="VAR_033790" description="In dbSNP:rs16918128.">
    <original>A</original>
    <variation>T</variation>
    <location>
        <position position="442"/>
    </location>
</feature>
<feature type="sequence variant" id="VAR_033791" description="In dbSNP:rs35934703.">
    <original>G</original>
    <variation>R</variation>
    <location>
        <position position="446"/>
    </location>
</feature>
<feature type="sequence variant" id="VAR_048776" description="In dbSNP:rs2297603.">
    <original>G</original>
    <variation>V</variation>
    <location>
        <position position="504"/>
    </location>
</feature>
<feature type="sequence variant" id="VAR_033792" description="In dbSNP:rs35250850.">
    <original>E</original>
    <variation>D</variation>
    <location>
        <position position="506"/>
    </location>
</feature>
<feature type="sequence variant" id="VAR_033793" description="In dbSNP:rs35529307.">
    <original>P</original>
    <variation>R</variation>
    <location>
        <position position="531"/>
    </location>
</feature>
<feature type="sequence variant" id="VAR_061114" description="In dbSNP:rs41308900.">
    <original>P</original>
    <variation>L</variation>
    <location>
        <position position="705"/>
    </location>
</feature>
<feature type="sequence variant" id="VAR_033794" description="In dbSNP:rs35642150.">
    <original>K</original>
    <variation>R</variation>
    <location>
        <position position="989"/>
    </location>
</feature>
<feature type="sequence variant" id="VAR_033795" description="In dbSNP:rs35544077.">
    <original>K</original>
    <variation>R</variation>
    <location>
        <position position="1001"/>
    </location>
</feature>
<feature type="sequence variant" id="VAR_033796" description="In dbSNP:rs10519.">
    <original>V</original>
    <variation>I</variation>
    <location>
        <position position="1332"/>
    </location>
</feature>
<feature type="sequence conflict" description="In Ref. 4; BAA04762." evidence="14" ref="4">
    <original>C</original>
    <variation>S</variation>
    <location>
        <position position="10"/>
    </location>
</feature>
<feature type="sequence conflict" description="In Ref. 1; AAA58429." evidence="14" ref="1">
    <original>V</original>
    <variation>D</variation>
    <location>
        <position position="49"/>
    </location>
</feature>
<feature type="sequence conflict" description="In Ref. 1; AAA58429 and 4; BAA04762." evidence="14" ref="1 4">
    <original>SV</original>
    <variation>RA</variation>
    <location>
        <begin position="94"/>
        <end position="95"/>
    </location>
</feature>
<feature type="sequence conflict" description="In Ref. 1; AAA58429." evidence="14" ref="1">
    <original>A</original>
    <variation>P</variation>
    <location>
        <position position="150"/>
    </location>
</feature>
<feature type="sequence conflict" description="In Ref. 1; AAA58429 and 2; AAC78500." evidence="14" ref="1 2">
    <original>A</original>
    <variation>R</variation>
    <location>
        <position position="409"/>
    </location>
</feature>
<feature type="sequence conflict" description="In Ref. 2; AAC78500." evidence="14" ref="2">
    <original>L</original>
    <variation>LLGELIPIPADSPPPPALSSN</variation>
    <location>
        <position position="1134"/>
    </location>
</feature>
<feature type="sequence conflict" description="In Ref. 2; AAC78500." evidence="14" ref="2">
    <location>
        <begin position="1178"/>
        <end position="1197"/>
    </location>
</feature>
<feature type="sequence conflict" description="In Ref. 2; AAC78500." evidence="14" ref="2">
    <original>F</original>
    <variation>V</variation>
    <location>
        <position position="1227"/>
    </location>
</feature>
<feature type="strand" evidence="15">
    <location>
        <begin position="1135"/>
        <end position="1140"/>
    </location>
</feature>
<feature type="helix" evidence="15">
    <location>
        <begin position="1141"/>
        <end position="1145"/>
    </location>
</feature>
<feature type="helix" evidence="15">
    <location>
        <begin position="1146"/>
        <end position="1150"/>
    </location>
</feature>
<feature type="strand" evidence="15">
    <location>
        <begin position="1155"/>
        <end position="1159"/>
    </location>
</feature>
<feature type="turn" evidence="15">
    <location>
        <begin position="1160"/>
        <end position="1163"/>
    </location>
</feature>
<feature type="strand" evidence="15">
    <location>
        <begin position="1164"/>
        <end position="1169"/>
    </location>
</feature>
<feature type="strand" evidence="15">
    <location>
        <begin position="1172"/>
        <end position="1175"/>
    </location>
</feature>